<keyword id="KW-0093">Biotin biosynthesis</keyword>
<keyword id="KW-0663">Pyridoxal phosphate</keyword>
<keyword id="KW-1185">Reference proteome</keyword>
<keyword id="KW-0808">Transferase</keyword>
<protein>
    <recommendedName>
        <fullName evidence="1">8-amino-7-oxononanoate synthase</fullName>
        <shortName evidence="1">AONS</shortName>
        <ecNumber evidence="1">2.3.1.47</ecNumber>
    </recommendedName>
    <alternativeName>
        <fullName evidence="1">7-keto-8-amino-pelargonic acid synthase</fullName>
        <shortName evidence="1">7-KAP synthase</shortName>
        <shortName evidence="1">KAPA synthase</shortName>
    </alternativeName>
    <alternativeName>
        <fullName evidence="1">8-amino-7-ketopelargonate synthase</fullName>
    </alternativeName>
</protein>
<name>BIOF_HAHCH</name>
<dbReference type="EC" id="2.3.1.47" evidence="1"/>
<dbReference type="EMBL" id="CP000155">
    <property type="protein sequence ID" value="ABC32039.1"/>
    <property type="molecule type" value="Genomic_DNA"/>
</dbReference>
<dbReference type="RefSeq" id="WP_011399103.1">
    <property type="nucleotide sequence ID" value="NC_007645.1"/>
</dbReference>
<dbReference type="SMR" id="Q2SBD5"/>
<dbReference type="STRING" id="349521.HCH_05370"/>
<dbReference type="KEGG" id="hch:HCH_05370"/>
<dbReference type="eggNOG" id="COG0156">
    <property type="taxonomic scope" value="Bacteria"/>
</dbReference>
<dbReference type="HOGENOM" id="CLU_015846_11_2_6"/>
<dbReference type="OrthoDB" id="9807157at2"/>
<dbReference type="UniPathway" id="UPA00078"/>
<dbReference type="Proteomes" id="UP000000238">
    <property type="component" value="Chromosome"/>
</dbReference>
<dbReference type="GO" id="GO:0008710">
    <property type="term" value="F:8-amino-7-oxononanoate synthase activity"/>
    <property type="evidence" value="ECO:0007669"/>
    <property type="project" value="UniProtKB-UniRule"/>
</dbReference>
<dbReference type="GO" id="GO:0030170">
    <property type="term" value="F:pyridoxal phosphate binding"/>
    <property type="evidence" value="ECO:0007669"/>
    <property type="project" value="UniProtKB-UniRule"/>
</dbReference>
<dbReference type="GO" id="GO:0009102">
    <property type="term" value="P:biotin biosynthetic process"/>
    <property type="evidence" value="ECO:0007669"/>
    <property type="project" value="UniProtKB-UniRule"/>
</dbReference>
<dbReference type="CDD" id="cd06454">
    <property type="entry name" value="KBL_like"/>
    <property type="match status" value="1"/>
</dbReference>
<dbReference type="Gene3D" id="3.90.1150.10">
    <property type="entry name" value="Aspartate Aminotransferase, domain 1"/>
    <property type="match status" value="1"/>
</dbReference>
<dbReference type="Gene3D" id="3.40.640.10">
    <property type="entry name" value="Type I PLP-dependent aspartate aminotransferase-like (Major domain)"/>
    <property type="match status" value="1"/>
</dbReference>
<dbReference type="HAMAP" id="MF_01693">
    <property type="entry name" value="BioF_aminotrans_2"/>
    <property type="match status" value="1"/>
</dbReference>
<dbReference type="InterPro" id="IPR001917">
    <property type="entry name" value="Aminotrans_II_pyridoxalP_BS"/>
</dbReference>
<dbReference type="InterPro" id="IPR004839">
    <property type="entry name" value="Aminotransferase_I/II_large"/>
</dbReference>
<dbReference type="InterPro" id="IPR050087">
    <property type="entry name" value="AON_synthase_class-II"/>
</dbReference>
<dbReference type="InterPro" id="IPR004723">
    <property type="entry name" value="AONS_Archaea/Proteobacteria"/>
</dbReference>
<dbReference type="InterPro" id="IPR022834">
    <property type="entry name" value="AONS_Proteobacteria"/>
</dbReference>
<dbReference type="InterPro" id="IPR015424">
    <property type="entry name" value="PyrdxlP-dep_Trfase"/>
</dbReference>
<dbReference type="InterPro" id="IPR015421">
    <property type="entry name" value="PyrdxlP-dep_Trfase_major"/>
</dbReference>
<dbReference type="InterPro" id="IPR015422">
    <property type="entry name" value="PyrdxlP-dep_Trfase_small"/>
</dbReference>
<dbReference type="NCBIfam" id="TIGR00858">
    <property type="entry name" value="bioF"/>
    <property type="match status" value="1"/>
</dbReference>
<dbReference type="PANTHER" id="PTHR13693:SF100">
    <property type="entry name" value="8-AMINO-7-OXONONANOATE SYNTHASE"/>
    <property type="match status" value="1"/>
</dbReference>
<dbReference type="PANTHER" id="PTHR13693">
    <property type="entry name" value="CLASS II AMINOTRANSFERASE/8-AMINO-7-OXONONANOATE SYNTHASE"/>
    <property type="match status" value="1"/>
</dbReference>
<dbReference type="Pfam" id="PF00155">
    <property type="entry name" value="Aminotran_1_2"/>
    <property type="match status" value="1"/>
</dbReference>
<dbReference type="SUPFAM" id="SSF53383">
    <property type="entry name" value="PLP-dependent transferases"/>
    <property type="match status" value="1"/>
</dbReference>
<dbReference type="PROSITE" id="PS00599">
    <property type="entry name" value="AA_TRANSFER_CLASS_2"/>
    <property type="match status" value="1"/>
</dbReference>
<reference key="1">
    <citation type="journal article" date="2005" name="Nucleic Acids Res.">
        <title>Genomic blueprint of Hahella chejuensis, a marine microbe producing an algicidal agent.</title>
        <authorList>
            <person name="Jeong H."/>
            <person name="Yim J.H."/>
            <person name="Lee C."/>
            <person name="Choi S.-H."/>
            <person name="Park Y.K."/>
            <person name="Yoon S.H."/>
            <person name="Hur C.-G."/>
            <person name="Kang H.-Y."/>
            <person name="Kim D."/>
            <person name="Lee H.H."/>
            <person name="Park K.H."/>
            <person name="Park S.-H."/>
            <person name="Park H.-S."/>
            <person name="Lee H.K."/>
            <person name="Oh T.K."/>
            <person name="Kim J.F."/>
        </authorList>
    </citation>
    <scope>NUCLEOTIDE SEQUENCE [LARGE SCALE GENOMIC DNA]</scope>
    <source>
        <strain>KCTC 2396</strain>
    </source>
</reference>
<comment type="function">
    <text evidence="1">Catalyzes the decarboxylative condensation of pimeloyl-[acyl-carrier protein] and L-alanine to produce 8-amino-7-oxononanoate (AON), [acyl-carrier protein], and carbon dioxide.</text>
</comment>
<comment type="catalytic activity">
    <reaction evidence="1">
        <text>6-carboxyhexanoyl-[ACP] + L-alanine + H(+) = (8S)-8-amino-7-oxononanoate + holo-[ACP] + CO2</text>
        <dbReference type="Rhea" id="RHEA:42288"/>
        <dbReference type="Rhea" id="RHEA-COMP:9685"/>
        <dbReference type="Rhea" id="RHEA-COMP:9955"/>
        <dbReference type="ChEBI" id="CHEBI:15378"/>
        <dbReference type="ChEBI" id="CHEBI:16526"/>
        <dbReference type="ChEBI" id="CHEBI:57972"/>
        <dbReference type="ChEBI" id="CHEBI:64479"/>
        <dbReference type="ChEBI" id="CHEBI:78846"/>
        <dbReference type="ChEBI" id="CHEBI:149468"/>
        <dbReference type="EC" id="2.3.1.47"/>
    </reaction>
</comment>
<comment type="cofactor">
    <cofactor evidence="1">
        <name>pyridoxal 5'-phosphate</name>
        <dbReference type="ChEBI" id="CHEBI:597326"/>
    </cofactor>
</comment>
<comment type="pathway">
    <text evidence="1">Cofactor biosynthesis; biotin biosynthesis.</text>
</comment>
<comment type="subunit">
    <text evidence="1">Homodimer.</text>
</comment>
<comment type="similarity">
    <text evidence="1">Belongs to the class-II pyridoxal-phosphate-dependent aminotransferase family. BioF subfamily.</text>
</comment>
<sequence>MSKWGHLAQTLTARKQQDLYRSRLTIDSPQAPRVMIEGREYLAFCSNDYLGLANDPRLIAAAQQALSEFGLGGGASHLVIGHHRAHHELELDLAEFTGRDRALLFSTGYMANLGVASALLGRGDYVIEDKLNHASLLDAGMLSGARLLRYRHADAEHLALRLDEVGDSRALVITDGVFSMDGDIAPLDAIAQVCHSKDAMLMVDDAHGFGVLGTEGGGCAAHFQMNQVQVPVLMGTLGKSYGAAGAFVAGSGELIETLVQFARTYIYTTSMPPAIAAAARVSLRISREETWRRERLNELVTRFRKEAIGMGYQLAASSTPIQPVFIGDAAAAMELSQALRKEGILITAIRPPTVPANTSRLRVTFSAAHTDDDLNQLLEVLHKYRGATNIAGVANA</sequence>
<proteinExistence type="inferred from homology"/>
<gene>
    <name evidence="1" type="primary">bioF</name>
    <name type="ordered locus">HCH_05370</name>
</gene>
<organism>
    <name type="scientific">Hahella chejuensis (strain KCTC 2396)</name>
    <dbReference type="NCBI Taxonomy" id="349521"/>
    <lineage>
        <taxon>Bacteria</taxon>
        <taxon>Pseudomonadati</taxon>
        <taxon>Pseudomonadota</taxon>
        <taxon>Gammaproteobacteria</taxon>
        <taxon>Oceanospirillales</taxon>
        <taxon>Hahellaceae</taxon>
        <taxon>Hahella</taxon>
    </lineage>
</organism>
<accession>Q2SBD5</accession>
<evidence type="ECO:0000255" key="1">
    <source>
        <dbReference type="HAMAP-Rule" id="MF_01693"/>
    </source>
</evidence>
<feature type="chain" id="PRO_0000381008" description="8-amino-7-oxononanoate synthase">
    <location>
        <begin position="1"/>
        <end position="396"/>
    </location>
</feature>
<feature type="binding site" evidence="1">
    <location>
        <position position="21"/>
    </location>
    <ligand>
        <name>substrate</name>
    </ligand>
</feature>
<feature type="binding site" evidence="1">
    <location>
        <begin position="108"/>
        <end position="109"/>
    </location>
    <ligand>
        <name>pyridoxal 5'-phosphate</name>
        <dbReference type="ChEBI" id="CHEBI:597326"/>
    </ligand>
</feature>
<feature type="binding site" evidence="1">
    <location>
        <position position="133"/>
    </location>
    <ligand>
        <name>substrate</name>
    </ligand>
</feature>
<feature type="binding site" evidence="1">
    <location>
        <position position="179"/>
    </location>
    <ligand>
        <name>pyridoxal 5'-phosphate</name>
        <dbReference type="ChEBI" id="CHEBI:597326"/>
    </ligand>
</feature>
<feature type="binding site" evidence="1">
    <location>
        <position position="207"/>
    </location>
    <ligand>
        <name>pyridoxal 5'-phosphate</name>
        <dbReference type="ChEBI" id="CHEBI:597326"/>
    </ligand>
</feature>
<feature type="binding site" evidence="1">
    <location>
        <position position="236"/>
    </location>
    <ligand>
        <name>pyridoxal 5'-phosphate</name>
        <dbReference type="ChEBI" id="CHEBI:597326"/>
    </ligand>
</feature>
<feature type="binding site" evidence="1">
    <location>
        <position position="353"/>
    </location>
    <ligand>
        <name>substrate</name>
    </ligand>
</feature>
<feature type="modified residue" description="N6-(pyridoxal phosphate)lysine" evidence="1">
    <location>
        <position position="239"/>
    </location>
</feature>